<gene>
    <name evidence="5" type="primary">zwf1</name>
    <name type="ORF">SPAC3A12.18</name>
    <name type="ORF">SPAC9.01</name>
</gene>
<keyword id="KW-0119">Carbohydrate metabolism</keyword>
<keyword id="KW-0963">Cytoplasm</keyword>
<keyword id="KW-0313">Glucose metabolism</keyword>
<keyword id="KW-0521">NADP</keyword>
<keyword id="KW-0560">Oxidoreductase</keyword>
<keyword id="KW-1185">Reference proteome</keyword>
<accession>O00091</accession>
<accession>Q9UT26</accession>
<dbReference type="EC" id="1.1.1.49" evidence="2"/>
<dbReference type="EMBL" id="CU329670">
    <property type="protein sequence ID" value="CAB08746.2"/>
    <property type="molecule type" value="Genomic_DNA"/>
</dbReference>
<dbReference type="PIR" id="T39186">
    <property type="entry name" value="T39186"/>
</dbReference>
<dbReference type="RefSeq" id="NP_593344.2">
    <property type="nucleotide sequence ID" value="NM_001018776.2"/>
</dbReference>
<dbReference type="SMR" id="O00091"/>
<dbReference type="BioGRID" id="279629">
    <property type="interactions" value="3"/>
</dbReference>
<dbReference type="FunCoup" id="O00091">
    <property type="interactions" value="448"/>
</dbReference>
<dbReference type="IntAct" id="O00091">
    <property type="interactions" value="1"/>
</dbReference>
<dbReference type="MINT" id="O00091"/>
<dbReference type="STRING" id="284812.O00091"/>
<dbReference type="iPTMnet" id="O00091"/>
<dbReference type="PaxDb" id="4896-SPAC3A12.18.1"/>
<dbReference type="EnsemblFungi" id="SPAC3A12.18.1">
    <property type="protein sequence ID" value="SPAC3A12.18.1:pep"/>
    <property type="gene ID" value="SPAC3A12.18"/>
</dbReference>
<dbReference type="GeneID" id="2543200"/>
<dbReference type="KEGG" id="spo:2543200"/>
<dbReference type="PomBase" id="SPAC3A12.18">
    <property type="gene designation" value="zwf1"/>
</dbReference>
<dbReference type="VEuPathDB" id="FungiDB:SPAC3A12.18"/>
<dbReference type="eggNOG" id="KOG0563">
    <property type="taxonomic scope" value="Eukaryota"/>
</dbReference>
<dbReference type="HOGENOM" id="CLU_013524_2_3_1"/>
<dbReference type="InParanoid" id="O00091"/>
<dbReference type="OMA" id="ERAGYYE"/>
<dbReference type="PhylomeDB" id="O00091"/>
<dbReference type="Reactome" id="R-SPO-5628897">
    <property type="pathway name" value="TP53 Regulates Metabolic Genes"/>
</dbReference>
<dbReference type="Reactome" id="R-SPO-71336">
    <property type="pathway name" value="Pentose phosphate pathway"/>
</dbReference>
<dbReference type="UniPathway" id="UPA00115">
    <property type="reaction ID" value="UER00408"/>
</dbReference>
<dbReference type="PRO" id="PR:O00091"/>
<dbReference type="Proteomes" id="UP000002485">
    <property type="component" value="Chromosome I"/>
</dbReference>
<dbReference type="GO" id="GO:0005829">
    <property type="term" value="C:cytosol"/>
    <property type="evidence" value="ECO:0007005"/>
    <property type="project" value="PomBase"/>
</dbReference>
<dbReference type="GO" id="GO:0004345">
    <property type="term" value="F:glucose-6-phosphate dehydrogenase activity"/>
    <property type="evidence" value="ECO:0000314"/>
    <property type="project" value="PomBase"/>
</dbReference>
<dbReference type="GO" id="GO:0050661">
    <property type="term" value="F:NADP binding"/>
    <property type="evidence" value="ECO:0007669"/>
    <property type="project" value="InterPro"/>
</dbReference>
<dbReference type="GO" id="GO:0006006">
    <property type="term" value="P:glucose metabolic process"/>
    <property type="evidence" value="ECO:0000318"/>
    <property type="project" value="GO_Central"/>
</dbReference>
<dbReference type="GO" id="GO:0009051">
    <property type="term" value="P:pentose-phosphate shunt, oxidative branch"/>
    <property type="evidence" value="ECO:0000318"/>
    <property type="project" value="GO_Central"/>
</dbReference>
<dbReference type="FunFam" id="3.30.360.10:FF:000018">
    <property type="entry name" value="Glucose-6-phosphate 1-dehydrogenase"/>
    <property type="match status" value="1"/>
</dbReference>
<dbReference type="FunFam" id="3.40.50.720:FF:000222">
    <property type="entry name" value="Glucose-6-phosphate 1-dehydrogenase"/>
    <property type="match status" value="1"/>
</dbReference>
<dbReference type="Gene3D" id="3.30.360.10">
    <property type="entry name" value="Dihydrodipicolinate Reductase, domain 2"/>
    <property type="match status" value="1"/>
</dbReference>
<dbReference type="Gene3D" id="3.40.50.720">
    <property type="entry name" value="NAD(P)-binding Rossmann-like Domain"/>
    <property type="match status" value="1"/>
</dbReference>
<dbReference type="HAMAP" id="MF_00966">
    <property type="entry name" value="G6PD"/>
    <property type="match status" value="1"/>
</dbReference>
<dbReference type="InterPro" id="IPR001282">
    <property type="entry name" value="G6P_DH"/>
</dbReference>
<dbReference type="InterPro" id="IPR019796">
    <property type="entry name" value="G6P_DH_AS"/>
</dbReference>
<dbReference type="InterPro" id="IPR022675">
    <property type="entry name" value="G6P_DH_C"/>
</dbReference>
<dbReference type="InterPro" id="IPR022674">
    <property type="entry name" value="G6P_DH_NAD-bd"/>
</dbReference>
<dbReference type="InterPro" id="IPR036291">
    <property type="entry name" value="NAD(P)-bd_dom_sf"/>
</dbReference>
<dbReference type="NCBIfam" id="TIGR00871">
    <property type="entry name" value="zwf"/>
    <property type="match status" value="1"/>
</dbReference>
<dbReference type="PANTHER" id="PTHR23429:SF0">
    <property type="entry name" value="GLUCOSE-6-PHOSPHATE 1-DEHYDROGENASE"/>
    <property type="match status" value="1"/>
</dbReference>
<dbReference type="PANTHER" id="PTHR23429">
    <property type="entry name" value="GLUCOSE-6-PHOSPHATE 1-DEHYDROGENASE G6PD"/>
    <property type="match status" value="1"/>
</dbReference>
<dbReference type="Pfam" id="PF02781">
    <property type="entry name" value="G6PD_C"/>
    <property type="match status" value="1"/>
</dbReference>
<dbReference type="Pfam" id="PF00479">
    <property type="entry name" value="G6PD_N"/>
    <property type="match status" value="1"/>
</dbReference>
<dbReference type="PIRSF" id="PIRSF000110">
    <property type="entry name" value="G6PD"/>
    <property type="match status" value="1"/>
</dbReference>
<dbReference type="PRINTS" id="PR00079">
    <property type="entry name" value="G6PDHDRGNASE"/>
</dbReference>
<dbReference type="SUPFAM" id="SSF55347">
    <property type="entry name" value="Glyceraldehyde-3-phosphate dehydrogenase-like, C-terminal domain"/>
    <property type="match status" value="1"/>
</dbReference>
<dbReference type="SUPFAM" id="SSF51735">
    <property type="entry name" value="NAD(P)-binding Rossmann-fold domains"/>
    <property type="match status" value="1"/>
</dbReference>
<dbReference type="PROSITE" id="PS00069">
    <property type="entry name" value="G6P_DEHYDROGENASE"/>
    <property type="match status" value="1"/>
</dbReference>
<protein>
    <recommendedName>
        <fullName evidence="5">Glucose-6-phosphate 1-dehydrogenase</fullName>
        <shortName>G6PD</shortName>
        <ecNumber evidence="2">1.1.1.49</ecNumber>
    </recommendedName>
</protein>
<comment type="function">
    <text evidence="2">Catalyzes the rate-limiting step of the oxidative pentose-phosphate pathway, which represents a route for the dissimilation of carbohydrates besides glycolysis. The main function of this enzyme is to provide reducing power (NADPH) and pentose phosphates for fatty acid and nucleic acid synthesis (By similarity).</text>
</comment>
<comment type="catalytic activity">
    <reaction evidence="2">
        <text>D-glucose 6-phosphate + NADP(+) = 6-phospho-D-glucono-1,5-lactone + NADPH + H(+)</text>
        <dbReference type="Rhea" id="RHEA:15841"/>
        <dbReference type="ChEBI" id="CHEBI:15378"/>
        <dbReference type="ChEBI" id="CHEBI:57783"/>
        <dbReference type="ChEBI" id="CHEBI:57955"/>
        <dbReference type="ChEBI" id="CHEBI:58349"/>
        <dbReference type="ChEBI" id="CHEBI:61548"/>
        <dbReference type="EC" id="1.1.1.49"/>
    </reaction>
</comment>
<comment type="pathway">
    <text evidence="2">Carbohydrate degradation; pentose phosphate pathway; D-ribulose 5-phosphate from D-glucose 6-phosphate (oxidative stage): step 1/3.</text>
</comment>
<comment type="subcellular location">
    <subcellularLocation>
        <location evidence="3">Cytoplasm</location>
        <location evidence="3">Cytosol</location>
    </subcellularLocation>
</comment>
<comment type="similarity">
    <text evidence="4">Belongs to the glucose-6-phosphate dehydrogenase family.</text>
</comment>
<feature type="chain" id="PRO_0000068106" description="Glucose-6-phosphate 1-dehydrogenase">
    <location>
        <begin position="1"/>
        <end position="500"/>
    </location>
</feature>
<feature type="active site" description="Proton acceptor" evidence="1">
    <location>
        <position position="247"/>
    </location>
</feature>
<feature type="binding site" evidence="2">
    <location>
        <begin position="18"/>
        <end position="25"/>
    </location>
    <ligand>
        <name>NADP(+)</name>
        <dbReference type="ChEBI" id="CHEBI:58349"/>
        <label>1</label>
    </ligand>
</feature>
<feature type="binding site" evidence="2">
    <location>
        <position position="52"/>
    </location>
    <ligand>
        <name>NADP(+)</name>
        <dbReference type="ChEBI" id="CHEBI:58349"/>
        <label>1</label>
    </ligand>
</feature>
<feature type="binding site" evidence="2">
    <location>
        <position position="155"/>
    </location>
    <ligand>
        <name>D-glucose 6-phosphate</name>
        <dbReference type="ChEBI" id="CHEBI:61548"/>
    </ligand>
</feature>
<feature type="binding site" evidence="2">
    <location>
        <position position="155"/>
    </location>
    <ligand>
        <name>NADP(+)</name>
        <dbReference type="ChEBI" id="CHEBI:58349"/>
        <label>1</label>
    </ligand>
</feature>
<feature type="binding site" evidence="2">
    <location>
        <begin position="185"/>
        <end position="189"/>
    </location>
    <ligand>
        <name>D-glucose 6-phosphate</name>
        <dbReference type="ChEBI" id="CHEBI:61548"/>
    </ligand>
</feature>
<feature type="binding site" evidence="2">
    <location>
        <position position="223"/>
    </location>
    <ligand>
        <name>D-glucose 6-phosphate</name>
        <dbReference type="ChEBI" id="CHEBI:61548"/>
    </ligand>
</feature>
<feature type="binding site" evidence="2">
    <location>
        <position position="242"/>
    </location>
    <ligand>
        <name>D-glucose 6-phosphate</name>
        <dbReference type="ChEBI" id="CHEBI:61548"/>
    </ligand>
</feature>
<feature type="binding site" evidence="2">
    <location>
        <position position="338"/>
    </location>
    <ligand>
        <name>NADP(+)</name>
        <dbReference type="ChEBI" id="CHEBI:58349"/>
        <label>2</label>
    </ligand>
</feature>
<feature type="binding site" evidence="2">
    <location>
        <position position="341"/>
    </location>
    <ligand>
        <name>D-glucose 6-phosphate</name>
        <dbReference type="ChEBI" id="CHEBI:61548"/>
    </ligand>
</feature>
<feature type="binding site" evidence="2">
    <location>
        <position position="347"/>
    </location>
    <ligand>
        <name>NADP(+)</name>
        <dbReference type="ChEBI" id="CHEBI:58349"/>
        <label>2</label>
    </ligand>
</feature>
<feature type="binding site" evidence="2">
    <location>
        <position position="351"/>
    </location>
    <ligand>
        <name>NADP(+)</name>
        <dbReference type="ChEBI" id="CHEBI:58349"/>
        <label>2</label>
    </ligand>
</feature>
<feature type="binding site" evidence="2">
    <location>
        <position position="373"/>
    </location>
    <ligand>
        <name>NADP(+)</name>
        <dbReference type="ChEBI" id="CHEBI:58349"/>
        <label>2</label>
    </ligand>
</feature>
<feature type="binding site" evidence="2">
    <location>
        <position position="375"/>
    </location>
    <ligand>
        <name>D-glucose 6-phosphate</name>
        <dbReference type="ChEBI" id="CHEBI:61548"/>
    </ligand>
</feature>
<feature type="binding site" evidence="2">
    <location>
        <begin position="381"/>
        <end position="383"/>
    </location>
    <ligand>
        <name>NADP(+)</name>
        <dbReference type="ChEBI" id="CHEBI:58349"/>
        <label>2</label>
    </ligand>
</feature>
<feature type="binding site" evidence="2">
    <location>
        <begin position="401"/>
        <end position="403"/>
    </location>
    <ligand>
        <name>NADP(+)</name>
        <dbReference type="ChEBI" id="CHEBI:58349"/>
        <label>2</label>
    </ligand>
</feature>
<feature type="binding site" evidence="2">
    <location>
        <position position="483"/>
    </location>
    <ligand>
        <name>NADP(+)</name>
        <dbReference type="ChEBI" id="CHEBI:58349"/>
        <label>2</label>
    </ligand>
</feature>
<name>G6PD_SCHPO</name>
<sequence length="500" mass="57204">MSSANLSIKENGAMVVFGASGDLSKKKTFPALFSLFSEGRLPKDIRIVGYARSKIEHEDFLDRITQNIKIDEEDSQAKEKLEEFKKRCSYYRGSYDKPEDFEGLNSHLCEREGDRSTHNRIFYLALPPDVFVSVATNLKKKCVPEKGIARLVIEKPFGVDLKSAQELQSQLAPLFDEKEIYRIDHYLGKEMVQNLVHLRFCNPVISHLWDKNSISSVQITFKEPIGTEGRGGYFDSSTIVRDIVQNHLVQILTLLTMETPTTFSADDLRDEKVKVLRRTRLGDLKDIVLGQYVKSKDGKKPGYLDDETVPKGSRCPTYSAIPCFIDTERWRGVPFLLKAGKAMDIGKVEIRVQFKAAANGLFKDAYHNELVIRVQPDEAIYFKMNIKQPGLSEAPLLTDLDLTYSRRFKNMKLHEAYEALFLDAFAGDQSRFARIDELECAWSLVDPLLKYMEEEKPVPEPYEYGSDGPECLYSFLKKFGYIYDSPDYYDYPVMSVPSDH</sequence>
<evidence type="ECO:0000250" key="1">
    <source>
        <dbReference type="UniProtKB" id="P11411"/>
    </source>
</evidence>
<evidence type="ECO:0000250" key="2">
    <source>
        <dbReference type="UniProtKB" id="P11413"/>
    </source>
</evidence>
<evidence type="ECO:0000269" key="3">
    <source>
    </source>
</evidence>
<evidence type="ECO:0000305" key="4"/>
<evidence type="ECO:0000312" key="5">
    <source>
        <dbReference type="PomBase" id="SPAC3A12.18"/>
    </source>
</evidence>
<organism>
    <name type="scientific">Schizosaccharomyces pombe (strain 972 / ATCC 24843)</name>
    <name type="common">Fission yeast</name>
    <dbReference type="NCBI Taxonomy" id="284812"/>
    <lineage>
        <taxon>Eukaryota</taxon>
        <taxon>Fungi</taxon>
        <taxon>Dikarya</taxon>
        <taxon>Ascomycota</taxon>
        <taxon>Taphrinomycotina</taxon>
        <taxon>Schizosaccharomycetes</taxon>
        <taxon>Schizosaccharomycetales</taxon>
        <taxon>Schizosaccharomycetaceae</taxon>
        <taxon>Schizosaccharomyces</taxon>
    </lineage>
</organism>
<reference key="1">
    <citation type="journal article" date="2002" name="Nature">
        <title>The genome sequence of Schizosaccharomyces pombe.</title>
        <authorList>
            <person name="Wood V."/>
            <person name="Gwilliam R."/>
            <person name="Rajandream M.A."/>
            <person name="Lyne M.H."/>
            <person name="Lyne R."/>
            <person name="Stewart A."/>
            <person name="Sgouros J.G."/>
            <person name="Peat N."/>
            <person name="Hayles J."/>
            <person name="Baker S.G."/>
            <person name="Basham D."/>
            <person name="Bowman S."/>
            <person name="Brooks K."/>
            <person name="Brown D."/>
            <person name="Brown S."/>
            <person name="Chillingworth T."/>
            <person name="Churcher C.M."/>
            <person name="Collins M."/>
            <person name="Connor R."/>
            <person name="Cronin A."/>
            <person name="Davis P."/>
            <person name="Feltwell T."/>
            <person name="Fraser A."/>
            <person name="Gentles S."/>
            <person name="Goble A."/>
            <person name="Hamlin N."/>
            <person name="Harris D.E."/>
            <person name="Hidalgo J."/>
            <person name="Hodgson G."/>
            <person name="Holroyd S."/>
            <person name="Hornsby T."/>
            <person name="Howarth S."/>
            <person name="Huckle E.J."/>
            <person name="Hunt S."/>
            <person name="Jagels K."/>
            <person name="James K.D."/>
            <person name="Jones L."/>
            <person name="Jones M."/>
            <person name="Leather S."/>
            <person name="McDonald S."/>
            <person name="McLean J."/>
            <person name="Mooney P."/>
            <person name="Moule S."/>
            <person name="Mungall K.L."/>
            <person name="Murphy L.D."/>
            <person name="Niblett D."/>
            <person name="Odell C."/>
            <person name="Oliver K."/>
            <person name="O'Neil S."/>
            <person name="Pearson D."/>
            <person name="Quail M.A."/>
            <person name="Rabbinowitsch E."/>
            <person name="Rutherford K.M."/>
            <person name="Rutter S."/>
            <person name="Saunders D."/>
            <person name="Seeger K."/>
            <person name="Sharp S."/>
            <person name="Skelton J."/>
            <person name="Simmonds M.N."/>
            <person name="Squares R."/>
            <person name="Squares S."/>
            <person name="Stevens K."/>
            <person name="Taylor K."/>
            <person name="Taylor R.G."/>
            <person name="Tivey A."/>
            <person name="Walsh S.V."/>
            <person name="Warren T."/>
            <person name="Whitehead S."/>
            <person name="Woodward J.R."/>
            <person name="Volckaert G."/>
            <person name="Aert R."/>
            <person name="Robben J."/>
            <person name="Grymonprez B."/>
            <person name="Weltjens I."/>
            <person name="Vanstreels E."/>
            <person name="Rieger M."/>
            <person name="Schaefer M."/>
            <person name="Mueller-Auer S."/>
            <person name="Gabel C."/>
            <person name="Fuchs M."/>
            <person name="Duesterhoeft A."/>
            <person name="Fritzc C."/>
            <person name="Holzer E."/>
            <person name="Moestl D."/>
            <person name="Hilbert H."/>
            <person name="Borzym K."/>
            <person name="Langer I."/>
            <person name="Beck A."/>
            <person name="Lehrach H."/>
            <person name="Reinhardt R."/>
            <person name="Pohl T.M."/>
            <person name="Eger P."/>
            <person name="Zimmermann W."/>
            <person name="Wedler H."/>
            <person name="Wambutt R."/>
            <person name="Purnelle B."/>
            <person name="Goffeau A."/>
            <person name="Cadieu E."/>
            <person name="Dreano S."/>
            <person name="Gloux S."/>
            <person name="Lelaure V."/>
            <person name="Mottier S."/>
            <person name="Galibert F."/>
            <person name="Aves S.J."/>
            <person name="Xiang Z."/>
            <person name="Hunt C."/>
            <person name="Moore K."/>
            <person name="Hurst S.M."/>
            <person name="Lucas M."/>
            <person name="Rochet M."/>
            <person name="Gaillardin C."/>
            <person name="Tallada V.A."/>
            <person name="Garzon A."/>
            <person name="Thode G."/>
            <person name="Daga R.R."/>
            <person name="Cruzado L."/>
            <person name="Jimenez J."/>
            <person name="Sanchez M."/>
            <person name="del Rey F."/>
            <person name="Benito J."/>
            <person name="Dominguez A."/>
            <person name="Revuelta J.L."/>
            <person name="Moreno S."/>
            <person name="Armstrong J."/>
            <person name="Forsburg S.L."/>
            <person name="Cerutti L."/>
            <person name="Lowe T."/>
            <person name="McCombie W.R."/>
            <person name="Paulsen I."/>
            <person name="Potashkin J."/>
            <person name="Shpakovski G.V."/>
            <person name="Ussery D."/>
            <person name="Barrell B.G."/>
            <person name="Nurse P."/>
        </authorList>
    </citation>
    <scope>NUCLEOTIDE SEQUENCE [LARGE SCALE GENOMIC DNA]</scope>
    <source>
        <strain>972 / ATCC 24843</strain>
    </source>
</reference>
<reference key="2">
    <citation type="journal article" date="2006" name="Nat. Biotechnol.">
        <title>ORFeome cloning and global analysis of protein localization in the fission yeast Schizosaccharomyces pombe.</title>
        <authorList>
            <person name="Matsuyama A."/>
            <person name="Arai R."/>
            <person name="Yashiroda Y."/>
            <person name="Shirai A."/>
            <person name="Kamata A."/>
            <person name="Sekido S."/>
            <person name="Kobayashi Y."/>
            <person name="Hashimoto A."/>
            <person name="Hamamoto M."/>
            <person name="Hiraoka Y."/>
            <person name="Horinouchi S."/>
            <person name="Yoshida M."/>
        </authorList>
    </citation>
    <scope>SUBCELLULAR LOCATION</scope>
</reference>
<proteinExistence type="inferred from homology"/>